<name>LPXF_RHIEC</name>
<evidence type="ECO:0000250" key="1">
    <source>
        <dbReference type="UniProtKB" id="A0Q4N6"/>
    </source>
</evidence>
<evidence type="ECO:0000255" key="2"/>
<evidence type="ECO:0000269" key="3">
    <source>
    </source>
</evidence>
<evidence type="ECO:0000303" key="4">
    <source>
    </source>
</evidence>
<evidence type="ECO:0000305" key="5"/>
<evidence type="ECO:0000305" key="6">
    <source>
    </source>
</evidence>
<reference key="1">
    <citation type="journal article" date="2006" name="Proc. Natl. Acad. Sci. U.S.A.">
        <title>The partitioned Rhizobium etli genome: genetic and metabolic redundancy in seven interacting replicons.</title>
        <authorList>
            <person name="Gonzalez V."/>
            <person name="Santamaria R.I."/>
            <person name="Bustos P."/>
            <person name="Hernandez-Gonzalez I."/>
            <person name="Medrano-Soto A."/>
            <person name="Moreno-Hagelsieb G."/>
            <person name="Janga S.C."/>
            <person name="Ramirez M.A."/>
            <person name="Jimenez-Jacinto V."/>
            <person name="Collado-Vides J."/>
            <person name="Davila G."/>
        </authorList>
    </citation>
    <scope>NUCLEOTIDE SEQUENCE [LARGE SCALE GENOMIC DNA]</scope>
    <source>
        <strain>ATCC 51251 / DSM 11541 / JCM 21823 / NBRC 15573 / CFN 42</strain>
    </source>
</reference>
<reference key="2">
    <citation type="journal article" date="2010" name="Biochim. Biophys. Acta">
        <title>Altered lipid A structures and polymyxin hypersensitivity of Rhizobium etli mutants lacking the LpxE and LpxF phosphatases.</title>
        <authorList>
            <person name="Ingram B.O."/>
            <person name="Sohlenkamp C."/>
            <person name="Geiger O."/>
            <person name="Raetz C.R."/>
        </authorList>
    </citation>
    <scope>FUNCTION</scope>
    <scope>DISRUPTION PHENOTYPE</scope>
    <scope>ANTIBIOTIC RESISTANCE</scope>
    <source>
        <strain>ATCC 51251 / DSM 11541 / JCM 21823 / NBRC 15573 / CFN 42</strain>
    </source>
</reference>
<proteinExistence type="inferred from homology"/>
<sequence>MTAFSKHRWRGPVIRRPKTTFGAFLLLFWTWWALLAVFRAFPGIDIYFSQLFFLGTDCDATAAAGSICGGFPYRDSGNFDLLRTIFFRLPYVVAIVMAWKLIECYQQHGATFNAERARKLKVGLGALLIGPVLLVNVILKEHWGRPRPVQTDIFGGALHFVEAGSLAGKCVSNCSFVSGEAASAGWLFCLLLFVPKSLRYALVPPVAAISILTPAMRLSFGAHYLSDVTLGWLSSLVVFAALLALTESQQHQKNSEI</sequence>
<accession>Q2KA78</accession>
<comment type="function">
    <text evidence="6">Probably removes the 4'-phosphate moiety from lipid A species. Not seen to act on other membrane components, nor does it dephosphorylate the 1-phosphate group of lipid A and/or lipid A precursors.</text>
</comment>
<comment type="pathway">
    <text evidence="5">Bacterial outer membrane biogenesis; LPS lipid A biosynthesis.</text>
</comment>
<comment type="subcellular location">
    <subcellularLocation>
        <location evidence="1">Cell inner membrane</location>
        <topology evidence="2">Multi-pass membrane protein</topology>
    </subcellularLocation>
</comment>
<comment type="disruption phenotype">
    <text evidence="3">Lipid A contains a monophosphate group at position 4' instead of the usual galacturonic acid moiety. No longer has 4'-dephosphorylase activity on Kdo(2)-lipid IV(A). Increased sensitivity to the cationic antimicrobial peptide (CAMP) polymyxin B (PMB) but not to other several other antibiotics. A double lpxE-lpxF mutant contains lipid A bi-phosphorylated at positions 1- and 4'- and has greater sensitivity to PMB than either single mutant. No visible effect on free-living bacteria, or on nitrogen fixation upon nodulation of P.vulgaris.</text>
</comment>
<comment type="miscellaneous">
    <text evidence="6">In this strain lipid A lacks phosphate groups, instead contains a galacturonic acid moiety at position-4' in place of the monophosphate group found in E.coli.</text>
</comment>
<comment type="similarity">
    <text evidence="5">Belongs to the lipid A LpxF 4'-phosphatase family.</text>
</comment>
<dbReference type="EC" id="3.1.-.-" evidence="5"/>
<dbReference type="EMBL" id="CP000133">
    <property type="protein sequence ID" value="ABC90258.1"/>
    <property type="molecule type" value="Genomic_DNA"/>
</dbReference>
<dbReference type="RefSeq" id="WP_011424788.1">
    <property type="nucleotide sequence ID" value="NC_007761.1"/>
</dbReference>
<dbReference type="SMR" id="Q2KA78"/>
<dbReference type="KEGG" id="ret:RHE_CH01455"/>
<dbReference type="eggNOG" id="COG0671">
    <property type="taxonomic scope" value="Bacteria"/>
</dbReference>
<dbReference type="HOGENOM" id="CLU_070327_1_0_5"/>
<dbReference type="OrthoDB" id="9813524at2"/>
<dbReference type="UniPathway" id="UPA00973"/>
<dbReference type="Proteomes" id="UP000001936">
    <property type="component" value="Chromosome"/>
</dbReference>
<dbReference type="GO" id="GO:0005886">
    <property type="term" value="C:plasma membrane"/>
    <property type="evidence" value="ECO:0007669"/>
    <property type="project" value="UniProtKB-SubCell"/>
</dbReference>
<dbReference type="GO" id="GO:0016787">
    <property type="term" value="F:hydrolase activity"/>
    <property type="evidence" value="ECO:0007669"/>
    <property type="project" value="UniProtKB-KW"/>
</dbReference>
<dbReference type="GO" id="GO:0009245">
    <property type="term" value="P:lipid A biosynthetic process"/>
    <property type="evidence" value="ECO:0007669"/>
    <property type="project" value="UniProtKB-UniPathway"/>
</dbReference>
<dbReference type="GO" id="GO:0009103">
    <property type="term" value="P:lipopolysaccharide biosynthetic process"/>
    <property type="evidence" value="ECO:0007669"/>
    <property type="project" value="UniProtKB-KW"/>
</dbReference>
<dbReference type="GO" id="GO:0046677">
    <property type="term" value="P:response to antibiotic"/>
    <property type="evidence" value="ECO:0007669"/>
    <property type="project" value="UniProtKB-KW"/>
</dbReference>
<dbReference type="Gene3D" id="1.20.144.10">
    <property type="entry name" value="Phosphatidic acid phosphatase type 2/haloperoxidase"/>
    <property type="match status" value="1"/>
</dbReference>
<dbReference type="InterPro" id="IPR036938">
    <property type="entry name" value="P_Acid_Pase_2/haloperoxi_sf"/>
</dbReference>
<dbReference type="InterPro" id="IPR000326">
    <property type="entry name" value="P_Acid_Pase_2/haloperoxidase"/>
</dbReference>
<dbReference type="Pfam" id="PF01569">
    <property type="entry name" value="PAP2"/>
    <property type="match status" value="1"/>
</dbReference>
<dbReference type="SMART" id="SM00014">
    <property type="entry name" value="acidPPc"/>
    <property type="match status" value="1"/>
</dbReference>
<dbReference type="SUPFAM" id="SSF48317">
    <property type="entry name" value="Acid phosphatase/Vanadium-dependent haloperoxidase"/>
    <property type="match status" value="1"/>
</dbReference>
<protein>
    <recommendedName>
        <fullName evidence="4">Lipid A 4'-phosphatase</fullName>
        <ecNumber evidence="5">3.1.-.-</ecNumber>
    </recommendedName>
</protein>
<feature type="chain" id="PRO_0000432497" description="Lipid A 4'-phosphatase">
    <location>
        <begin position="1"/>
        <end position="257"/>
    </location>
</feature>
<feature type="transmembrane region" description="Helical; Name=1" evidence="2">
    <location>
        <begin position="21"/>
        <end position="41"/>
    </location>
</feature>
<feature type="transmembrane region" description="Helical; Name=2" evidence="2">
    <location>
        <begin position="85"/>
        <end position="105"/>
    </location>
</feature>
<feature type="transmembrane region" description="Helical; Name=3" evidence="2">
    <location>
        <begin position="119"/>
        <end position="139"/>
    </location>
</feature>
<feature type="transmembrane region" description="Helical; Name=4" evidence="2">
    <location>
        <begin position="174"/>
        <end position="194"/>
    </location>
</feature>
<feature type="transmembrane region" description="Helical; Name=5" evidence="2">
    <location>
        <begin position="201"/>
        <end position="221"/>
    </location>
</feature>
<feature type="transmembrane region" description="Helical; Name=6" evidence="2">
    <location>
        <begin position="225"/>
        <end position="245"/>
    </location>
</feature>
<keyword id="KW-0046">Antibiotic resistance</keyword>
<keyword id="KW-0997">Cell inner membrane</keyword>
<keyword id="KW-1003">Cell membrane</keyword>
<keyword id="KW-0378">Hydrolase</keyword>
<keyword id="KW-0441">Lipid A biosynthesis</keyword>
<keyword id="KW-0444">Lipid biosynthesis</keyword>
<keyword id="KW-0443">Lipid metabolism</keyword>
<keyword id="KW-0448">Lipopolysaccharide biosynthesis</keyword>
<keyword id="KW-0472">Membrane</keyword>
<keyword id="KW-1185">Reference proteome</keyword>
<keyword id="KW-0812">Transmembrane</keyword>
<keyword id="KW-1133">Transmembrane helix</keyword>
<organism>
    <name type="scientific">Rhizobium etli (strain ATCC 51251 / DSM 11541 / JCM 21823 / NBRC 15573 / CFN 42)</name>
    <dbReference type="NCBI Taxonomy" id="347834"/>
    <lineage>
        <taxon>Bacteria</taxon>
        <taxon>Pseudomonadati</taxon>
        <taxon>Pseudomonadota</taxon>
        <taxon>Alphaproteobacteria</taxon>
        <taxon>Hyphomicrobiales</taxon>
        <taxon>Rhizobiaceae</taxon>
        <taxon>Rhizobium/Agrobacterium group</taxon>
        <taxon>Rhizobium</taxon>
    </lineage>
</organism>
<gene>
    <name evidence="4" type="primary">lpxf</name>
    <name type="ordered locus">RHE_CH01455</name>
</gene>